<keyword id="KW-0539">Nucleus</keyword>
<keyword id="KW-1185">Reference proteome</keyword>
<feature type="chain" id="PRO_0000330900" description="Probable nucleosome assembly protein">
    <location>
        <begin position="1"/>
        <end position="321"/>
    </location>
</feature>
<feature type="region of interest" description="Disordered" evidence="2">
    <location>
        <begin position="272"/>
        <end position="321"/>
    </location>
</feature>
<feature type="compositionally biased region" description="Acidic residues" evidence="2">
    <location>
        <begin position="272"/>
        <end position="298"/>
    </location>
</feature>
<feature type="compositionally biased region" description="Low complexity" evidence="2">
    <location>
        <begin position="311"/>
        <end position="321"/>
    </location>
</feature>
<reference key="1">
    <citation type="journal article" date="2005" name="Nature">
        <title>The genome of the social amoeba Dictyostelium discoideum.</title>
        <authorList>
            <person name="Eichinger L."/>
            <person name="Pachebat J.A."/>
            <person name="Gloeckner G."/>
            <person name="Rajandream M.A."/>
            <person name="Sucgang R."/>
            <person name="Berriman M."/>
            <person name="Song J."/>
            <person name="Olsen R."/>
            <person name="Szafranski K."/>
            <person name="Xu Q."/>
            <person name="Tunggal B."/>
            <person name="Kummerfeld S."/>
            <person name="Madera M."/>
            <person name="Konfortov B.A."/>
            <person name="Rivero F."/>
            <person name="Bankier A.T."/>
            <person name="Lehmann R."/>
            <person name="Hamlin N."/>
            <person name="Davies R."/>
            <person name="Gaudet P."/>
            <person name="Fey P."/>
            <person name="Pilcher K."/>
            <person name="Chen G."/>
            <person name="Saunders D."/>
            <person name="Sodergren E.J."/>
            <person name="Davis P."/>
            <person name="Kerhornou A."/>
            <person name="Nie X."/>
            <person name="Hall N."/>
            <person name="Anjard C."/>
            <person name="Hemphill L."/>
            <person name="Bason N."/>
            <person name="Farbrother P."/>
            <person name="Desany B."/>
            <person name="Just E."/>
            <person name="Morio T."/>
            <person name="Rost R."/>
            <person name="Churcher C.M."/>
            <person name="Cooper J."/>
            <person name="Haydock S."/>
            <person name="van Driessche N."/>
            <person name="Cronin A."/>
            <person name="Goodhead I."/>
            <person name="Muzny D.M."/>
            <person name="Mourier T."/>
            <person name="Pain A."/>
            <person name="Lu M."/>
            <person name="Harper D."/>
            <person name="Lindsay R."/>
            <person name="Hauser H."/>
            <person name="James K.D."/>
            <person name="Quiles M."/>
            <person name="Madan Babu M."/>
            <person name="Saito T."/>
            <person name="Buchrieser C."/>
            <person name="Wardroper A."/>
            <person name="Felder M."/>
            <person name="Thangavelu M."/>
            <person name="Johnson D."/>
            <person name="Knights A."/>
            <person name="Loulseged H."/>
            <person name="Mungall K.L."/>
            <person name="Oliver K."/>
            <person name="Price C."/>
            <person name="Quail M.A."/>
            <person name="Urushihara H."/>
            <person name="Hernandez J."/>
            <person name="Rabbinowitsch E."/>
            <person name="Steffen D."/>
            <person name="Sanders M."/>
            <person name="Ma J."/>
            <person name="Kohara Y."/>
            <person name="Sharp S."/>
            <person name="Simmonds M.N."/>
            <person name="Spiegler S."/>
            <person name="Tivey A."/>
            <person name="Sugano S."/>
            <person name="White B."/>
            <person name="Walker D."/>
            <person name="Woodward J.R."/>
            <person name="Winckler T."/>
            <person name="Tanaka Y."/>
            <person name="Shaulsky G."/>
            <person name="Schleicher M."/>
            <person name="Weinstock G.M."/>
            <person name="Rosenthal A."/>
            <person name="Cox E.C."/>
            <person name="Chisholm R.L."/>
            <person name="Gibbs R.A."/>
            <person name="Loomis W.F."/>
            <person name="Platzer M."/>
            <person name="Kay R.R."/>
            <person name="Williams J.G."/>
            <person name="Dear P.H."/>
            <person name="Noegel A.A."/>
            <person name="Barrell B.G."/>
            <person name="Kuspa A."/>
        </authorList>
    </citation>
    <scope>NUCLEOTIDE SEQUENCE [LARGE SCALE GENOMIC DNA]</scope>
    <source>
        <strain>AX4</strain>
    </source>
</reference>
<evidence type="ECO:0000250" key="1"/>
<evidence type="ECO:0000256" key="2">
    <source>
        <dbReference type="SAM" id="MobiDB-lite"/>
    </source>
</evidence>
<evidence type="ECO:0000305" key="3"/>
<protein>
    <recommendedName>
        <fullName>Probable nucleosome assembly protein</fullName>
    </recommendedName>
</protein>
<proteinExistence type="evidence at transcript level"/>
<accession>Q55ED1</accession>
<dbReference type="EMBL" id="AAFI02000005">
    <property type="protein sequence ID" value="EAL71995.1"/>
    <property type="molecule type" value="Genomic_DNA"/>
</dbReference>
<dbReference type="RefSeq" id="XP_645850.1">
    <property type="nucleotide sequence ID" value="XM_640758.1"/>
</dbReference>
<dbReference type="SMR" id="Q55ED1"/>
<dbReference type="FunCoup" id="Q55ED1">
    <property type="interactions" value="852"/>
</dbReference>
<dbReference type="STRING" id="44689.Q55ED1"/>
<dbReference type="PaxDb" id="44689-DDB0267102"/>
<dbReference type="EnsemblProtists" id="EAL71995">
    <property type="protein sequence ID" value="EAL71995"/>
    <property type="gene ID" value="DDB_G0269290"/>
</dbReference>
<dbReference type="GeneID" id="8616794"/>
<dbReference type="KEGG" id="ddi:DDB_G0269290"/>
<dbReference type="dictyBase" id="DDB_G0269290">
    <property type="gene designation" value="nap1"/>
</dbReference>
<dbReference type="VEuPathDB" id="AmoebaDB:DDB_G0269290"/>
<dbReference type="eggNOG" id="KOG1507">
    <property type="taxonomic scope" value="Eukaryota"/>
</dbReference>
<dbReference type="HOGENOM" id="CLU_038841_1_0_1"/>
<dbReference type="InParanoid" id="Q55ED1"/>
<dbReference type="OMA" id="YSGDFMY"/>
<dbReference type="PhylomeDB" id="Q55ED1"/>
<dbReference type="PRO" id="PR:Q55ED1"/>
<dbReference type="Proteomes" id="UP000002195">
    <property type="component" value="Chromosome 1"/>
</dbReference>
<dbReference type="GO" id="GO:0000785">
    <property type="term" value="C:chromatin"/>
    <property type="evidence" value="ECO:0000318"/>
    <property type="project" value="GO_Central"/>
</dbReference>
<dbReference type="GO" id="GO:0005737">
    <property type="term" value="C:cytoplasm"/>
    <property type="evidence" value="ECO:0000250"/>
    <property type="project" value="dictyBase"/>
</dbReference>
<dbReference type="GO" id="GO:0061851">
    <property type="term" value="C:leading edge of lamellipodium"/>
    <property type="evidence" value="ECO:0000314"/>
    <property type="project" value="dictyBase"/>
</dbReference>
<dbReference type="GO" id="GO:0005634">
    <property type="term" value="C:nucleus"/>
    <property type="evidence" value="ECO:0000318"/>
    <property type="project" value="GO_Central"/>
</dbReference>
<dbReference type="GO" id="GO:0003682">
    <property type="term" value="F:chromatin binding"/>
    <property type="evidence" value="ECO:0000318"/>
    <property type="project" value="GO_Central"/>
</dbReference>
<dbReference type="GO" id="GO:0042393">
    <property type="term" value="F:histone binding"/>
    <property type="evidence" value="ECO:0000250"/>
    <property type="project" value="dictyBase"/>
</dbReference>
<dbReference type="GO" id="GO:0006334">
    <property type="term" value="P:nucleosome assembly"/>
    <property type="evidence" value="ECO:0000250"/>
    <property type="project" value="dictyBase"/>
</dbReference>
<dbReference type="FunFam" id="1.20.5.1500:FF:000001">
    <property type="entry name" value="Nucleosome assembly protein 1-like 1"/>
    <property type="match status" value="1"/>
</dbReference>
<dbReference type="Gene3D" id="1.20.5.1500">
    <property type="match status" value="1"/>
</dbReference>
<dbReference type="Gene3D" id="3.30.1120.90">
    <property type="entry name" value="Nucleosome assembly protein"/>
    <property type="match status" value="1"/>
</dbReference>
<dbReference type="InterPro" id="IPR037231">
    <property type="entry name" value="NAP-like_sf"/>
</dbReference>
<dbReference type="InterPro" id="IPR002164">
    <property type="entry name" value="NAP_family"/>
</dbReference>
<dbReference type="PANTHER" id="PTHR11875">
    <property type="entry name" value="TESTIS-SPECIFIC Y-ENCODED PROTEIN"/>
    <property type="match status" value="1"/>
</dbReference>
<dbReference type="Pfam" id="PF00956">
    <property type="entry name" value="NAP"/>
    <property type="match status" value="1"/>
</dbReference>
<dbReference type="SUPFAM" id="SSF143113">
    <property type="entry name" value="NAP-like"/>
    <property type="match status" value="1"/>
</dbReference>
<name>NAP1_DICDI</name>
<organism>
    <name type="scientific">Dictyostelium discoideum</name>
    <name type="common">Social amoeba</name>
    <dbReference type="NCBI Taxonomy" id="44689"/>
    <lineage>
        <taxon>Eukaryota</taxon>
        <taxon>Amoebozoa</taxon>
        <taxon>Evosea</taxon>
        <taxon>Eumycetozoa</taxon>
        <taxon>Dictyostelia</taxon>
        <taxon>Dictyosteliales</taxon>
        <taxon>Dictyosteliaceae</taxon>
        <taxon>Dictyostelium</taxon>
    </lineage>
</organism>
<sequence length="321" mass="36644">MSENNEIEMELPFDSSAITSTEVLDRVNALLTLQDTQNELTEQMEKEILEIEKKYLKKFQPLAEKRFEIVSGKVEPTKEDQQCKAPIQVENLKSVPTDKGIPKFWLHVLQNTEVKDIIEECDIEALEYLVDIKIVQVGDAQDYSLDFHFSENPFFTNTVISKTVKLEEDNELNEIVSTPINWKDGKNFTVQSKKKTVKSKPTKGKAATTTSTTVQEVVPCFFSTFVSPNQDPTSDEEADEIMYIQYQIIAKLKDIVIPEAVNFFLGRASDAEENDYDFGEDFEDEEGEDDDEEDDEEEQTIKKPSGKGKAQPQQPQDCKQQ</sequence>
<comment type="function">
    <text evidence="1">May modulate chromatin structure by regulation of histone octamer formation.</text>
</comment>
<comment type="subcellular location">
    <subcellularLocation>
        <location evidence="1">Nucleus</location>
    </subcellularLocation>
</comment>
<comment type="domain">
    <text>The acidic domain may be involved in the interaction with histones.</text>
</comment>
<comment type="similarity">
    <text evidence="3">Belongs to the nucleosome assembly protein (NAP) family.</text>
</comment>
<gene>
    <name type="primary">nap1</name>
    <name type="ORF">DDB_G0269290</name>
</gene>